<sequence length="266" mass="28275">MGLCSDPAITYLKRLGYNVVRLPREGIQPLHLLGQQRGTVEYLGSLEKLITQPPSEPPAITRDQAAAGINGQKTENLSFSIGINILKSVLAQFGAGAGIEAQYNQARKVRFEFSNVLADSVEPLAVGQFLKMAEVDADNPVLKQYVLGNGRLYVITQVIKSNEFTVAAEKSGGGSIQLDVPEIQKVVGGKLKVEASVSSQSTVTYKGEKQLVFGFKCFEIGVKNGEITLFASQPGAIAMALDAAGGVMPSDSALLDEGGLLDLEGF</sequence>
<comment type="function">
    <molecule>Gasdermin bGSDM</molecule>
    <text evidence="1 2 3 9">Precursor of a pore-forming protein involved in defense against bacteriophages (By similarity). Expression of bGSDM and the neighboring protease gene (Ga0334635_1659) is toxic in E.coli (PubMed:35025633). Cleavage of this precursor by its dedicated protease releases the active moiety (gasdermin bGSDM, N-terminus) which inserts into membranes, forming pores and triggering cell death (Probable) (PubMed:38509367).</text>
</comment>
<comment type="function">
    <molecule>Gasdermin bGSDM, N-terminus</molecule>
    <text evidence="4 9">Pore-forming protein that causes membrane permeabilization, probably via a pyroptosis-like activity (Probable) (PubMed:38509367). Makes ring-like pores with an interior pore diameter of 200-300 Angstroms, when integrated in liposomes (PubMed:38509367).</text>
</comment>
<comment type="activity regulation">
    <molecule>Gasdermin bGSDM</molecule>
    <text evidence="8 9">The full-length protein before cleavage is inactive: intramolecular interactions between the N-terminal domain and the C-terminal region as well as the lipid modification, mediate autoinhibition (Probable) (PubMed:35025633). The pyroptosis-like-inducing activity is carried by the released N-terminal domain (Gasdermin bGSDM, N-terminus) (Probable) (PubMed:38509367).</text>
</comment>
<comment type="subunit">
    <molecule>Gasdermin bGSDM</molecule>
    <text evidence="3">Monomer in solution.</text>
</comment>
<comment type="subunit">
    <molecule>Gasdermin bGSDM, N-terminus</molecule>
    <text evidence="4">Homooligomer; forms homooligomeric ring-shaped pores when inserted in membranes with 48-54 subunits per ring (PubMed:38509367).</text>
</comment>
<comment type="subcellular location">
    <molecule>Gasdermin bGSDM</molecule>
    <subcellularLocation>
        <location evidence="8">Cytoplasm</location>
    </subcellularLocation>
</comment>
<comment type="subcellular location">
    <molecule>Gasdermin bGSDM, N-terminus</molecule>
    <subcellularLocation>
        <location evidence="9">Cell inner membrane</location>
        <topology evidence="9">Multi-pass membrane protein</topology>
    </subcellularLocation>
</comment>
<comment type="domain">
    <text evidence="3">The N-terminus has marked structural similarity to the mammalian gasdermin N-terminal domain. The C-terminal region wraps around the twisted beta sheet core, probably stabilizing the inactive state (PubMed:35025633).</text>
</comment>
<comment type="domain">
    <text evidence="4 9">The beta-stranded transmembrane 'fingers' of the active protein form by local refolding of several alpha helices found only in the inactive state (PubMed:38509367). Reorientation of the N-terminus probably flips the palmitoyl moiety for insertion into the membrane (Probable) (PubMed:38509367).</text>
</comment>
<comment type="PTM">
    <text evidence="3 4">Palmitoylation helps stabilize the inactive state; may self palmitoylate (PubMed:35025633). Palmitoylation plays a significant role in pore formation (PubMed:38509367).</text>
</comment>
<comment type="mass spectrometry" mass="28320.96" method="Electrospray" evidence="3">
    <text>Full-length, unmodified protein expressed in E.coli.</text>
</comment>
<comment type="mass spectrometry" mass="28469.06" method="Electrospray" evidence="3">
    <text>Full-length, palmitoylated protein expressed in E.coli.</text>
</comment>
<comment type="mass spectrometry" mass="28494.81" method="Electrospray" evidence="3">
    <text>Full-length, modified protein expressed in E.coli.</text>
</comment>
<comment type="similarity">
    <text evidence="3">Belongs to the bacterial gasdermin family.</text>
</comment>
<evidence type="ECO:0000250" key="1">
    <source>
        <dbReference type="UniProtKB" id="A0A0S2DNG5"/>
    </source>
</evidence>
<evidence type="ECO:0000250" key="2">
    <source>
        <dbReference type="UniProtKB" id="P0DV48"/>
    </source>
</evidence>
<evidence type="ECO:0000269" key="3">
    <source>
    </source>
</evidence>
<evidence type="ECO:0000269" key="4">
    <source>
    </source>
</evidence>
<evidence type="ECO:0000303" key="5">
    <source>
    </source>
</evidence>
<evidence type="ECO:0000303" key="6">
    <source ref="1"/>
</evidence>
<evidence type="ECO:0000305" key="7"/>
<evidence type="ECO:0000305" key="8">
    <source>
    </source>
</evidence>
<evidence type="ECO:0000305" key="9">
    <source>
    </source>
</evidence>
<evidence type="ECO:0007744" key="10">
    <source>
        <dbReference type="PDB" id="7N51"/>
    </source>
</evidence>
<evidence type="ECO:0007744" key="11">
    <source>
        <dbReference type="PDB" id="8SL0"/>
    </source>
</evidence>
<protein>
    <recommendedName>
        <fullName evidence="5">Gasdermin bGSDM</fullName>
        <shortName evidence="5">bGSDM</shortName>
    </recommendedName>
    <alternativeName>
        <fullName evidence="5">Bacterial gasdermin</fullName>
    </alternativeName>
    <component>
        <recommendedName>
            <fullName evidence="7">Gasdermin bGSDM, N-terminus</fullName>
        </recommendedName>
    </component>
</protein>
<reference key="1">
    <citation type="submission" date="2018-04" db="EMBL/GenBank/DDBJ databases">
        <title>Vitiosangium phaeum 53X41T novel myxobacteria isolated from forest.</title>
        <authorList>
            <person name="Lv Y."/>
        </authorList>
    </citation>
    <scope>NUCLEOTIDE SEQUENCE [LARGE SCALE GENOMIC DNA]</scope>
    <source>
        <strain>GDMCC 1.1324</strain>
    </source>
</reference>
<reference evidence="10" key="2">
    <citation type="journal article" date="2022" name="Science">
        <title>Bacterial gasdermins reveal an ancient mechanism of cell death.</title>
        <authorList>
            <person name="Johnson A.G."/>
            <person name="Wein T."/>
            <person name="Mayer M.L."/>
            <person name="Duncan-Lowey B."/>
            <person name="Yirmiya E."/>
            <person name="Oppenheimer-Shaanan Y."/>
            <person name="Amitai G."/>
            <person name="Sorek R."/>
            <person name="Kranzusch P.J."/>
        </authorList>
    </citation>
    <scope>X-RAY CRYSTALLOGRAPHY (1.67 ANGSTROMS) OF 2-266</scope>
    <scope>FUNCTION</scope>
    <scope>SUBUNIT</scope>
    <scope>DOMAIN</scope>
    <scope>MASS SPECTROMETRY</scope>
    <scope>PALMITOYLATION AT CYS-4</scope>
    <scope>MUTAGENESIS OF 230-PHE--PHE-266</scope>
    <source>
        <strain>GDMCC 1.1324</strain>
    </source>
</reference>
<reference evidence="11" key="3">
    <citation type="journal article" date="2024" name="Nature">
        <title>Structure and assembly of a bacterial gasdermin pore.</title>
        <authorList>
            <person name="Johnson A.G."/>
            <person name="Mayer M.L."/>
            <person name="Schaefer S.L."/>
            <person name="McNamara-Bordewick N.K."/>
            <person name="Hummer G."/>
            <person name="Kranzusch P.J."/>
        </authorList>
    </citation>
    <scope>STRUCTURE BY ELECTRON MICROSCOPY (3.30 ANGSTROMS) OF 2-233</scope>
    <scope>FUNCTION</scope>
    <scope>SUBUNIT</scope>
    <scope>SUBCELLULAR LOCATION</scope>
    <scope>DOMAIN</scope>
    <scope>PALMITOYLATION</scope>
    <scope>MUTAGENESIS OF CYS-4; LEU-15; ARG-24; ALA-67; LEU-77; VAL-89; PHE-111; LEU-211; PHE-213 AND LYS-216</scope>
    <source>
        <strain>GDMCC 1.1324</strain>
    </source>
</reference>
<organism>
    <name type="scientific">Vitiosangium sp. (strain GDMCC 1.1324)</name>
    <dbReference type="NCBI Taxonomy" id="2138576"/>
    <lineage>
        <taxon>Bacteria</taxon>
        <taxon>Pseudomonadati</taxon>
        <taxon>Myxococcota</taxon>
        <taxon>Myxococcia</taxon>
        <taxon>Myxococcales</taxon>
        <taxon>Cystobacterineae</taxon>
        <taxon>Archangiaceae</taxon>
        <taxon>Vitiosangium</taxon>
    </lineage>
</organism>
<proteinExistence type="evidence at protein level"/>
<gene>
    <name evidence="6" type="ORF">DAT35_31115</name>
    <name evidence="5" type="ORF">Ga0334635_1658</name>
</gene>
<name>GSDM_VITXG</name>
<feature type="chain" id="PRO_0000455576" description="Gasdermin bGSDM">
    <location>
        <begin position="1"/>
        <end position="266"/>
    </location>
</feature>
<feature type="chain" id="PRO_0000455577" description="Gasdermin bGSDM, N-terminus" evidence="8 9">
    <location>
        <begin position="1"/>
        <end position="237"/>
    </location>
</feature>
<feature type="transmembrane region" description="Beta stranded" evidence="9 11">
    <location>
        <begin position="69"/>
        <end position="85"/>
    </location>
</feature>
<feature type="transmembrane region" description="Beta stranded" evidence="9 11">
    <location>
        <begin position="97"/>
        <end position="114"/>
    </location>
</feature>
<feature type="transmembrane region" description="Beta stranded" evidence="9 11">
    <location>
        <begin position="163"/>
        <end position="180"/>
    </location>
</feature>
<feature type="transmembrane region" description="Beta stranded" evidence="9 11">
    <location>
        <begin position="189"/>
        <end position="205"/>
    </location>
</feature>
<feature type="region of interest" description="C-terminal region" evidence="8 9">
    <location>
        <begin position="238"/>
        <end position="266"/>
    </location>
</feature>
<feature type="lipid moiety-binding region" description="S-palmitoyl cysteine" evidence="3">
    <location>
        <position position="4"/>
    </location>
</feature>
<feature type="mutagenesis site" description="Complete loss of toxicity of pore-forming domain in E.coli, significant reduction in leakiness of liposomes." evidence="4">
    <original>C</original>
    <variation>A</variation>
    <location>
        <position position="4"/>
    </location>
</feature>
<feature type="mutagenesis site" description="Pore-forming domain still toxic in E.coli. Complete loss of toxicity of pore-forming domain in E.coli; when associated with E-67." evidence="4">
    <original>L</original>
    <variation>A</variation>
    <location>
        <position position="15"/>
    </location>
</feature>
<feature type="mutagenesis site" description="100-fold reduction in toxicity of pore-forming domain in E.coli. Complete loss of toxicity of pore-forming domain in E.coli; when associated with E-216." evidence="4">
    <original>R</original>
    <variation>E</variation>
    <location>
        <position position="24"/>
    </location>
</feature>
<feature type="mutagenesis site" description="100-fold reduction in toxicity of pore-forming domain in E.coli. Complete loss of toxicity of pore-forming domain in E.coli; when associated with A-15 or when associated with E-216." evidence="4">
    <original>A</original>
    <variation>E</variation>
    <location>
        <position position="67"/>
    </location>
</feature>
<feature type="mutagenesis site" description="Pore-forming domain still toxic in E.coli." evidence="4">
    <original>L</original>
    <variation>A</variation>
    <location>
        <position position="77"/>
    </location>
</feature>
<feature type="mutagenesis site" description="Pore-forming domain still toxic in E.coli." evidence="4">
    <original>V</original>
    <variation>A</variation>
    <location>
        <position position="89"/>
    </location>
</feature>
<feature type="mutagenesis site" description="Pore-forming domain still toxic in E.coli." evidence="4">
    <original>F</original>
    <variation>A</variation>
    <location>
        <position position="111"/>
    </location>
</feature>
<feature type="mutagenesis site" description="100-fold reduction in toxicity of pore-forming domain in E.coli." evidence="4">
    <original>L</original>
    <variation>A</variation>
    <location>
        <position position="211"/>
    </location>
</feature>
<feature type="mutagenesis site" description="100-fold reduction in toxicity of pore-forming domain in E.coli." evidence="4">
    <original>F</original>
    <variation>A</variation>
    <location>
        <position position="213"/>
    </location>
</feature>
<feature type="mutagenesis site" description="1000-fold reduction in toxicity of pore-forming domain in E.coli. Complete loss of toxicity of pore-forming domain in E.coli; when associated with E-24 or when associated with E-67." evidence="4">
    <original>K</original>
    <variation>E</variation>
    <location>
        <position position="216"/>
    </location>
</feature>
<feature type="mutagenesis site" description="Increased cell growth arrest upon induction." evidence="3">
    <location>
        <begin position="230"/>
        <end position="266"/>
    </location>
</feature>
<keyword id="KW-0002">3D-structure</keyword>
<keyword id="KW-0051">Antiviral defense</keyword>
<keyword id="KW-0997">Cell inner membrane</keyword>
<keyword id="KW-1003">Cell membrane</keyword>
<keyword id="KW-0963">Cytoplasm</keyword>
<keyword id="KW-0449">Lipoprotein</keyword>
<keyword id="KW-0472">Membrane</keyword>
<keyword id="KW-0564">Palmitate</keyword>
<keyword id="KW-1185">Reference proteome</keyword>
<keyword id="KW-0812">Transmembrane</keyword>
<keyword id="KW-1134">Transmembrane beta strand</keyword>
<dbReference type="EMBL" id="PZOX01000012">
    <property type="protein sequence ID" value="PTL79885.1"/>
    <property type="molecule type" value="Genomic_DNA"/>
</dbReference>
<dbReference type="RefSeq" id="WP_108071778.1">
    <property type="nucleotide sequence ID" value="NZ_PZOX01000012.1"/>
</dbReference>
<dbReference type="PDB" id="7N51">
    <property type="method" value="X-ray"/>
    <property type="resolution" value="1.67 A"/>
    <property type="chains" value="A=2-266"/>
</dbReference>
<dbReference type="PDB" id="8SL0">
    <property type="method" value="EM"/>
    <property type="resolution" value="3.30 A"/>
    <property type="chains" value="A=2-233"/>
</dbReference>
<dbReference type="PDBsum" id="7N51"/>
<dbReference type="PDBsum" id="8SL0"/>
<dbReference type="EMDB" id="EMD-40570"/>
<dbReference type="EMDB" id="EMD-43508"/>
<dbReference type="EMDB" id="EMD-43509"/>
<dbReference type="EMDB" id="EMD-43510"/>
<dbReference type="EMDB" id="EMD-43511"/>
<dbReference type="EMDB" id="EMD-43513"/>
<dbReference type="SMR" id="A0A2T4VDM4"/>
<dbReference type="OrthoDB" id="583589at2"/>
<dbReference type="Proteomes" id="UP000240889">
    <property type="component" value="Unassembled WGS sequence"/>
</dbReference>
<dbReference type="GO" id="GO:0005737">
    <property type="term" value="C:cytoplasm"/>
    <property type="evidence" value="ECO:0007669"/>
    <property type="project" value="UniProtKB-SubCell"/>
</dbReference>
<dbReference type="GO" id="GO:0005886">
    <property type="term" value="C:plasma membrane"/>
    <property type="evidence" value="ECO:0007669"/>
    <property type="project" value="UniProtKB-SubCell"/>
</dbReference>
<dbReference type="GO" id="GO:0051607">
    <property type="term" value="P:defense response to virus"/>
    <property type="evidence" value="ECO:0007669"/>
    <property type="project" value="UniProtKB-KW"/>
</dbReference>
<accession>A0A2T4VDM4</accession>